<accession>P0DSP3</accession>
<feature type="chain" id="PRO_0000447703" description="Cyclic dipyrimidine nucleotide synthase CdnE">
    <location>
        <begin position="1"/>
        <end position="295"/>
    </location>
</feature>
<feature type="region of interest" description="Disordered" evidence="1">
    <location>
        <begin position="1"/>
        <end position="25"/>
    </location>
</feature>
<feature type="short sequence motif" description="Pyrimidine specificity motif (R/Q)xW in donor pocket" evidence="10">
    <location>
        <begin position="274"/>
        <end position="276"/>
    </location>
</feature>
<feature type="binding site" evidence="3 14">
    <location>
        <position position="51"/>
    </location>
    <ligand>
        <name>UTP</name>
        <dbReference type="ChEBI" id="CHEBI:46398"/>
        <label>acceptor</label>
    </ligand>
</feature>
<feature type="binding site" evidence="3 14">
    <location>
        <position position="53"/>
    </location>
    <ligand>
        <name>UTP</name>
        <dbReference type="ChEBI" id="CHEBI:46398"/>
        <label>donor</label>
    </ligand>
</feature>
<feature type="binding site" evidence="3">
    <location>
        <position position="59"/>
    </location>
    <ligand>
        <name>UTP</name>
        <dbReference type="ChEBI" id="CHEBI:46398"/>
        <label>donor</label>
    </ligand>
</feature>
<feature type="binding site" evidence="15">
    <location>
        <position position="65"/>
    </location>
    <ligand>
        <name>Mg(2+)</name>
        <dbReference type="ChEBI" id="CHEBI:18420"/>
        <label>3</label>
    </ligand>
</feature>
<feature type="binding site" evidence="14 15">
    <location>
        <position position="67"/>
    </location>
    <ligand>
        <name>Mg(2+)</name>
        <dbReference type="ChEBI" id="CHEBI:18420"/>
        <label>1</label>
    </ligand>
</feature>
<feature type="binding site" evidence="14 15">
    <location>
        <position position="67"/>
    </location>
    <ligand>
        <name>Mg(2+)</name>
        <dbReference type="ChEBI" id="CHEBI:18420"/>
        <label>2</label>
    </ligand>
</feature>
<feature type="binding site" evidence="3 14">
    <location>
        <position position="67"/>
    </location>
    <ligand>
        <name>UTP</name>
        <dbReference type="ChEBI" id="CHEBI:46398"/>
        <label>acceptor</label>
    </ligand>
</feature>
<feature type="binding site" evidence="3 14">
    <location>
        <position position="124"/>
    </location>
    <ligand>
        <name>UTP</name>
        <dbReference type="ChEBI" id="CHEBI:46398"/>
        <label>acceptor</label>
    </ligand>
</feature>
<feature type="binding site" evidence="3 14">
    <location>
        <position position="125"/>
    </location>
    <ligand>
        <name>UTP</name>
        <dbReference type="ChEBI" id="CHEBI:46398"/>
        <label>acceptor</label>
    </ligand>
</feature>
<feature type="binding site" evidence="15">
    <location>
        <position position="128"/>
    </location>
    <ligand>
        <name>Mg(2+)</name>
        <dbReference type="ChEBI" id="CHEBI:18420"/>
        <label>3</label>
    </ligand>
</feature>
<feature type="binding site" evidence="3 14 15">
    <location>
        <position position="139"/>
    </location>
    <ligand>
        <name>Mg(2+)</name>
        <dbReference type="ChEBI" id="CHEBI:18420"/>
        <label>2</label>
    </ligand>
</feature>
<feature type="binding site" evidence="3 15">
    <location>
        <position position="139"/>
    </location>
    <ligand>
        <name>Mg(2+)</name>
        <dbReference type="ChEBI" id="CHEBI:18420"/>
        <label>3</label>
    </ligand>
</feature>
<feature type="binding site" evidence="3 14">
    <location>
        <position position="139"/>
    </location>
    <ligand>
        <name>UTP</name>
        <dbReference type="ChEBI" id="CHEBI:46398"/>
        <label>acceptor</label>
    </ligand>
</feature>
<feature type="binding site" evidence="3 14">
    <location>
        <position position="173"/>
    </location>
    <ligand>
        <name>UTP</name>
        <dbReference type="ChEBI" id="CHEBI:46398"/>
        <label>acceptor</label>
    </ligand>
</feature>
<feature type="binding site" evidence="3 14">
    <location>
        <position position="201"/>
    </location>
    <ligand>
        <name>UTP</name>
        <dbReference type="ChEBI" id="CHEBI:46398"/>
        <label>donor</label>
    </ligand>
</feature>
<feature type="binding site" evidence="3 14">
    <location>
        <position position="220"/>
    </location>
    <ligand>
        <name>UTP</name>
        <dbReference type="ChEBI" id="CHEBI:46398"/>
        <label>donor</label>
    </ligand>
</feature>
<feature type="site" description="Important for uracil base recognition in acceptor pocket" evidence="10">
    <location>
        <position position="173"/>
    </location>
</feature>
<feature type="helix" evidence="16">
    <location>
        <begin position="5"/>
        <end position="12"/>
    </location>
</feature>
<feature type="helix" evidence="16">
    <location>
        <begin position="20"/>
        <end position="36"/>
    </location>
</feature>
<feature type="helix" evidence="16">
    <location>
        <begin position="41"/>
        <end position="43"/>
    </location>
</feature>
<feature type="strand" evidence="16">
    <location>
        <begin position="46"/>
        <end position="51"/>
    </location>
</feature>
<feature type="helix" evidence="16">
    <location>
        <begin position="52"/>
        <end position="55"/>
    </location>
</feature>
<feature type="strand" evidence="16">
    <location>
        <begin position="66"/>
        <end position="79"/>
    </location>
</feature>
<feature type="helix" evidence="16">
    <location>
        <begin position="88"/>
        <end position="91"/>
    </location>
</feature>
<feature type="helix" evidence="16">
    <location>
        <begin position="100"/>
        <end position="115"/>
    </location>
</feature>
<feature type="helix" evidence="16">
    <location>
        <begin position="117"/>
        <end position="119"/>
    </location>
</feature>
<feature type="strand" evidence="16">
    <location>
        <begin position="120"/>
        <end position="122"/>
    </location>
</feature>
<feature type="strand" evidence="16">
    <location>
        <begin position="124"/>
        <end position="131"/>
    </location>
</feature>
<feature type="turn" evidence="16">
    <location>
        <begin position="132"/>
        <end position="135"/>
    </location>
</feature>
<feature type="strand" evidence="16">
    <location>
        <begin position="136"/>
        <end position="153"/>
    </location>
</feature>
<feature type="strand" evidence="16">
    <location>
        <begin position="157"/>
        <end position="163"/>
    </location>
</feature>
<feature type="strand" evidence="16">
    <location>
        <begin position="171"/>
        <end position="173"/>
    </location>
</feature>
<feature type="helix" evidence="16">
    <location>
        <begin position="175"/>
        <end position="188"/>
    </location>
</feature>
<feature type="turn" evidence="16">
    <location>
        <begin position="189"/>
        <end position="191"/>
    </location>
</feature>
<feature type="helix" evidence="16">
    <location>
        <begin position="192"/>
        <end position="209"/>
    </location>
</feature>
<feature type="helix" evidence="16">
    <location>
        <begin position="213"/>
        <end position="215"/>
    </location>
</feature>
<feature type="helix" evidence="16">
    <location>
        <begin position="220"/>
        <end position="229"/>
    </location>
</feature>
<feature type="helix" evidence="16">
    <location>
        <begin position="232"/>
        <end position="235"/>
    </location>
</feature>
<feature type="helix" evidence="16">
    <location>
        <begin position="240"/>
        <end position="254"/>
    </location>
</feature>
<feature type="turn" evidence="16">
    <location>
        <begin position="255"/>
        <end position="257"/>
    </location>
</feature>
<feature type="strand" evidence="16">
    <location>
        <begin position="265"/>
        <end position="271"/>
    </location>
</feature>
<feature type="helix" evidence="16">
    <location>
        <begin position="278"/>
        <end position="291"/>
    </location>
</feature>
<comment type="function">
    <text evidence="2 5 7 9">Cyclic nucleotide synthase (second messenger synthase) of a CBASS antivirus system (PubMed:30787435). CBASS (cyclic oligonucleotide-based antiphage signaling system) provides immunity against bacteriophage. The CD-NTase protein synthesizes cyclic nucleotides in response to infection; these serve as specific second messenger signals. The signals activate a diverse range of effectors, leading to bacterial cell death and thus abortive phage infection (Probable). A type I-B(UU) CBASS system (PubMed:32839535).</text>
</comment>
<comment type="function">
    <text evidence="2">Cyclic dinucleotide synthase that catalyzes the synthesis of 3',3'-cyclic UMP-UMP (c-di-UMP) as the major product, and of 3',3'-cyclic CMP-UMP as a minor product, which are second messengers for cell signal transduction.</text>
</comment>
<comment type="catalytic activity">
    <reaction evidence="2">
        <text>2 UTP = c-di-UMP + 2 diphosphate</text>
        <dbReference type="Rhea" id="RHEA:60480"/>
        <dbReference type="ChEBI" id="CHEBI:33019"/>
        <dbReference type="ChEBI" id="CHEBI:46398"/>
        <dbReference type="ChEBI" id="CHEBI:143807"/>
    </reaction>
    <physiologicalReaction direction="left-to-right" evidence="8">
        <dbReference type="Rhea" id="RHEA:60481"/>
    </physiologicalReaction>
</comment>
<comment type="catalytic activity">
    <reaction evidence="2">
        <text>UTP + CTP = cyclic CMP-UMP + 2 diphosphate</text>
        <dbReference type="Rhea" id="RHEA:60484"/>
        <dbReference type="ChEBI" id="CHEBI:33019"/>
        <dbReference type="ChEBI" id="CHEBI:37563"/>
        <dbReference type="ChEBI" id="CHEBI:46398"/>
        <dbReference type="ChEBI" id="CHEBI:143811"/>
    </reaction>
    <physiologicalReaction direction="left-to-right" evidence="8">
        <dbReference type="Rhea" id="RHEA:60485"/>
    </physiologicalReaction>
</comment>
<comment type="cofactor">
    <cofactor evidence="3">
        <name>Mg(2+)</name>
        <dbReference type="ChEBI" id="CHEBI:18420"/>
    </cofactor>
    <text evidence="3">Binds 2-3 Mg(2+) ions per subunit; the third Mg(2+), liganded by Asp-65, Asp-128 and Asp-139, is only seen in complex with a substrate analog (PubMed:37604815). It is unclear if it is physiological (PubMed:37604815).</text>
</comment>
<comment type="domain">
    <text evidence="10">The (R/Q)xW motif controls pyrimidine nucleotide specificity in the donor pocket, while conserved Asn-173 is important for recognition of uracil in the acceptor pocket.</text>
</comment>
<comment type="similarity">
    <text evidence="8">Belongs to the CD-NTase family. E02 subfamily.</text>
</comment>
<comment type="caution">
    <text evidence="7">The sequence of this protein is available under the NCBI RefSeq accession WP_042646516, but the source is unknown.</text>
</comment>
<name>CDNE2_LEGPN</name>
<organism>
    <name type="scientific">Legionella pneumophila</name>
    <dbReference type="NCBI Taxonomy" id="446"/>
    <lineage>
        <taxon>Bacteria</taxon>
        <taxon>Pseudomonadati</taxon>
        <taxon>Pseudomonadota</taxon>
        <taxon>Gammaproteobacteria</taxon>
        <taxon>Legionellales</taxon>
        <taxon>Legionellaceae</taxon>
        <taxon>Legionella</taxon>
    </lineage>
</organism>
<dbReference type="EC" id="2.7.7.-" evidence="2"/>
<dbReference type="RefSeq" id="WP_042646516.1">
    <property type="nucleotide sequence ID" value="NZ_CCZG01000022.1"/>
</dbReference>
<dbReference type="PDB" id="7X4F">
    <property type="method" value="X-ray"/>
    <property type="resolution" value="2.46 A"/>
    <property type="chains" value="A=1-295"/>
</dbReference>
<dbReference type="PDB" id="7X4Q">
    <property type="method" value="X-ray"/>
    <property type="resolution" value="1.95 A"/>
    <property type="chains" value="A/B=1-295"/>
</dbReference>
<dbReference type="PDB" id="7X4T">
    <property type="method" value="X-ray"/>
    <property type="resolution" value="2.20 A"/>
    <property type="chains" value="A/B=1-295"/>
</dbReference>
<dbReference type="PDBsum" id="7X4F"/>
<dbReference type="PDBsum" id="7X4Q"/>
<dbReference type="PDBsum" id="7X4T"/>
<dbReference type="SMR" id="P0DSP3"/>
<dbReference type="GO" id="GO:0046872">
    <property type="term" value="F:metal ion binding"/>
    <property type="evidence" value="ECO:0007669"/>
    <property type="project" value="UniProtKB-KW"/>
</dbReference>
<dbReference type="GO" id="GO:0000166">
    <property type="term" value="F:nucleotide binding"/>
    <property type="evidence" value="ECO:0007669"/>
    <property type="project" value="UniProtKB-KW"/>
</dbReference>
<dbReference type="GO" id="GO:0016779">
    <property type="term" value="F:nucleotidyltransferase activity"/>
    <property type="evidence" value="ECO:0007669"/>
    <property type="project" value="UniProtKB-KW"/>
</dbReference>
<dbReference type="GO" id="GO:0051607">
    <property type="term" value="P:defense response to virus"/>
    <property type="evidence" value="ECO:0007669"/>
    <property type="project" value="UniProtKB-KW"/>
</dbReference>
<dbReference type="GO" id="GO:0009117">
    <property type="term" value="P:nucleotide metabolic process"/>
    <property type="evidence" value="ECO:0007669"/>
    <property type="project" value="UniProtKB-KW"/>
</dbReference>
<dbReference type="CDD" id="cd05400">
    <property type="entry name" value="NT_2-5OAS_ClassI-CCAase"/>
    <property type="match status" value="1"/>
</dbReference>
<dbReference type="Gene3D" id="3.30.460.10">
    <property type="entry name" value="Beta Polymerase, domain 2"/>
    <property type="match status" value="1"/>
</dbReference>
<dbReference type="InterPro" id="IPR006116">
    <property type="entry name" value="NT_2-5OAS_ClassI-CCAase"/>
</dbReference>
<dbReference type="InterPro" id="IPR043519">
    <property type="entry name" value="NT_sf"/>
</dbReference>
<dbReference type="InterPro" id="IPR002934">
    <property type="entry name" value="Polymerase_NTP_transf_dom"/>
</dbReference>
<dbReference type="Pfam" id="PF01909">
    <property type="entry name" value="NTP_transf_2"/>
    <property type="match status" value="1"/>
</dbReference>
<dbReference type="SUPFAM" id="SSF81301">
    <property type="entry name" value="Nucleotidyltransferase"/>
    <property type="match status" value="1"/>
</dbReference>
<reference key="1">
    <citation type="journal article" date="2019" name="Nature">
        <title>Bacterial cGAS-like enzymes synthesize diverse nucleotide signals.</title>
        <authorList>
            <person name="Whiteley A.T."/>
            <person name="Eaglesham J.B."/>
            <person name="de Oliveira Mann C.C."/>
            <person name="Morehouse B.R."/>
            <person name="Lowey B."/>
            <person name="Nieminen E.A."/>
            <person name="Danilchanka O."/>
            <person name="King D.S."/>
            <person name="Lee A.S.Y."/>
            <person name="Mekalanos J.J."/>
            <person name="Kranzusch P.J."/>
        </authorList>
    </citation>
    <scope>FUNCTION</scope>
    <scope>CATALYTIC ACTIVITY</scope>
    <scope>NOMENCLATURE</scope>
    <scope>SIMILARITY</scope>
    <source>
        <strain>12_4117</strain>
    </source>
</reference>
<reference key="2">
    <citation type="journal article" date="2020" name="Nat. Microbiol.">
        <title>Diversity and classification of cyclic-oligonucleotide-based anti-phage signalling systems.</title>
        <authorList>
            <person name="Millman A."/>
            <person name="Melamed S."/>
            <person name="Amitai G."/>
            <person name="Sorek R."/>
        </authorList>
    </citation>
    <scope>CLASSIFICATION AND NOMENCLATURE</scope>
</reference>
<reference evidence="11 12 13" key="3">
    <citation type="journal article" date="2023" name="Nat. Commun.">
        <title>Crystal structure and functional implications of cyclic di-pyrimidine-synthesizing cGAS/DncV-like nucleotidyltransferases.</title>
        <authorList>
            <person name="Yang C.S."/>
            <person name="Ko T.P."/>
            <person name="Chen C.J."/>
            <person name="Hou M.H."/>
            <person name="Wang Y.C."/>
            <person name="Chen Y."/>
        </authorList>
    </citation>
    <scope>X-RAY CRYSTALLOGRAPHY (1.95 ANGSTROMS) IN COMPLEX WITH MG(2+) AND UTP OR SUBSTRATE ANALOG</scope>
    <scope>COFACTOR</scope>
    <scope>NUCLEOTIDE-BINDING</scope>
</reference>
<gene>
    <name evidence="4" type="primary">cdnE02</name>
</gene>
<sequence>MSIDWEQTFRKWSKPSSETESTKAENAERMIKAAINSSQILSTKDISVFPQGSYRNNTNVREDSDVDICVCLNTLVLSDYSLVPGMNDKLAELRTASYTYKQFKSDLETALKNKFGTLGVSRGDKAFDVHANSYRVDADVVPAIQGRLYYDKNHNAFIRGTCIKPDSGGTIYNWPEQNYSNGVNKNKSTGNRFKLIVRAIKRLRNHLAEKGYNTAKPIPSYLMECLVYIVPDQYFTGDSYKTNVENCINYLYNQIDSSDWTEINEIKYLFGSHQMWNKTQVKEFLLTAWSYIQKN</sequence>
<proteinExistence type="evidence at protein level"/>
<protein>
    <recommendedName>
        <fullName evidence="8">Cyclic dipyrimidine nucleotide synthase CdnE</fullName>
        <shortName evidence="6">LpCdnE</shortName>
        <ecNumber evidence="2">2.7.7.-</ecNumber>
    </recommendedName>
    <alternativeName>
        <fullName evidence="8">Cyclic CMP-UMP synthase</fullName>
    </alternativeName>
    <alternativeName>
        <fullName evidence="8">c-di-UMP synthase</fullName>
    </alternativeName>
    <alternativeName>
        <fullName evidence="4">cGAS/DncV-like nucleotidyltransferase</fullName>
        <shortName evidence="4">CD-NTase057</shortName>
        <shortName evidence="4">Lp-CdnE02</shortName>
    </alternativeName>
</protein>
<keyword id="KW-0002">3D-structure</keyword>
<keyword id="KW-0051">Antiviral defense</keyword>
<keyword id="KW-0460">Magnesium</keyword>
<keyword id="KW-0479">Metal-binding</keyword>
<keyword id="KW-0546">Nucleotide metabolism</keyword>
<keyword id="KW-0547">Nucleotide-binding</keyword>
<keyword id="KW-0548">Nucleotidyltransferase</keyword>
<keyword id="KW-0808">Transferase</keyword>
<evidence type="ECO:0000256" key="1">
    <source>
        <dbReference type="SAM" id="MobiDB-lite"/>
    </source>
</evidence>
<evidence type="ECO:0000269" key="2">
    <source>
    </source>
</evidence>
<evidence type="ECO:0000269" key="3">
    <source>
    </source>
</evidence>
<evidence type="ECO:0000303" key="4">
    <source>
    </source>
</evidence>
<evidence type="ECO:0000303" key="5">
    <source>
    </source>
</evidence>
<evidence type="ECO:0000303" key="6">
    <source>
    </source>
</evidence>
<evidence type="ECO:0000305" key="7"/>
<evidence type="ECO:0000305" key="8">
    <source>
    </source>
</evidence>
<evidence type="ECO:0000305" key="9">
    <source>
    </source>
</evidence>
<evidence type="ECO:0000305" key="10">
    <source>
    </source>
</evidence>
<evidence type="ECO:0000312" key="11">
    <source>
        <dbReference type="PDB" id="7X4F"/>
    </source>
</evidence>
<evidence type="ECO:0000312" key="12">
    <source>
        <dbReference type="PDB" id="7X4Q"/>
    </source>
</evidence>
<evidence type="ECO:0000312" key="13">
    <source>
        <dbReference type="PDB" id="7X4T"/>
    </source>
</evidence>
<evidence type="ECO:0007744" key="14">
    <source>
        <dbReference type="PDB" id="7X4Q"/>
    </source>
</evidence>
<evidence type="ECO:0007744" key="15">
    <source>
        <dbReference type="PDB" id="7X4T"/>
    </source>
</evidence>
<evidence type="ECO:0007829" key="16">
    <source>
        <dbReference type="PDB" id="7X4Q"/>
    </source>
</evidence>